<keyword id="KW-0143">Chaperone</keyword>
<keyword id="KW-0963">Cytoplasm</keyword>
<keyword id="KW-1185">Reference proteome</keyword>
<proteinExistence type="inferred from homology"/>
<name>PFDA_SACS2</name>
<feature type="chain" id="PRO_0000153688" description="Prefoldin subunit alpha">
    <location>
        <begin position="1"/>
        <end position="147"/>
    </location>
</feature>
<dbReference type="EMBL" id="AE006641">
    <property type="protein sequence ID" value="AAK40679.1"/>
    <property type="molecule type" value="Genomic_DNA"/>
</dbReference>
<dbReference type="PIR" id="H90177">
    <property type="entry name" value="H90177"/>
</dbReference>
<dbReference type="RefSeq" id="WP_009990641.1">
    <property type="nucleotide sequence ID" value="NC_002754.1"/>
</dbReference>
<dbReference type="SMR" id="P58179"/>
<dbReference type="FunCoup" id="P58179">
    <property type="interactions" value="2"/>
</dbReference>
<dbReference type="STRING" id="273057.SSO0349"/>
<dbReference type="PaxDb" id="273057-SSO0349"/>
<dbReference type="EnsemblBacteria" id="AAK40679">
    <property type="protein sequence ID" value="AAK40679"/>
    <property type="gene ID" value="SSO0349"/>
</dbReference>
<dbReference type="GeneID" id="44129320"/>
<dbReference type="KEGG" id="sso:SSO0349"/>
<dbReference type="PATRIC" id="fig|273057.12.peg.340"/>
<dbReference type="eggNOG" id="arCOG01341">
    <property type="taxonomic scope" value="Archaea"/>
</dbReference>
<dbReference type="HOGENOM" id="CLU_1792160_0_0_2"/>
<dbReference type="InParanoid" id="P58179"/>
<dbReference type="Proteomes" id="UP000001974">
    <property type="component" value="Chromosome"/>
</dbReference>
<dbReference type="GO" id="GO:0005737">
    <property type="term" value="C:cytoplasm"/>
    <property type="evidence" value="ECO:0000318"/>
    <property type="project" value="GO_Central"/>
</dbReference>
<dbReference type="GO" id="GO:0016272">
    <property type="term" value="C:prefoldin complex"/>
    <property type="evidence" value="ECO:0000318"/>
    <property type="project" value="GO_Central"/>
</dbReference>
<dbReference type="GO" id="GO:0051082">
    <property type="term" value="F:unfolded protein binding"/>
    <property type="evidence" value="ECO:0007669"/>
    <property type="project" value="UniProtKB-UniRule"/>
</dbReference>
<dbReference type="GO" id="GO:0006457">
    <property type="term" value="P:protein folding"/>
    <property type="evidence" value="ECO:0007669"/>
    <property type="project" value="UniProtKB-UniRule"/>
</dbReference>
<dbReference type="CDD" id="cd00584">
    <property type="entry name" value="Prefoldin_alpha"/>
    <property type="match status" value="1"/>
</dbReference>
<dbReference type="Gene3D" id="1.10.287.370">
    <property type="match status" value="1"/>
</dbReference>
<dbReference type="HAMAP" id="MF_00308">
    <property type="entry name" value="PfdA"/>
    <property type="match status" value="1"/>
</dbReference>
<dbReference type="InterPro" id="IPR011599">
    <property type="entry name" value="PFD_alpha_archaea"/>
</dbReference>
<dbReference type="InterPro" id="IPR009053">
    <property type="entry name" value="Prefoldin"/>
</dbReference>
<dbReference type="InterPro" id="IPR004127">
    <property type="entry name" value="Prefoldin_subunit_alpha"/>
</dbReference>
<dbReference type="NCBIfam" id="TIGR00293">
    <property type="entry name" value="prefoldin subunit alpha"/>
    <property type="match status" value="1"/>
</dbReference>
<dbReference type="PANTHER" id="PTHR12674">
    <property type="entry name" value="PREFOLDIN SUBUNIT 5"/>
    <property type="match status" value="1"/>
</dbReference>
<dbReference type="PANTHER" id="PTHR12674:SF2">
    <property type="entry name" value="PREFOLDIN SUBUNIT 5"/>
    <property type="match status" value="1"/>
</dbReference>
<dbReference type="Pfam" id="PF02996">
    <property type="entry name" value="Prefoldin"/>
    <property type="match status" value="1"/>
</dbReference>
<dbReference type="SUPFAM" id="SSF46579">
    <property type="entry name" value="Prefoldin"/>
    <property type="match status" value="1"/>
</dbReference>
<sequence>MSQGQGGITLDELIAQADYLKRYIDSLQRTQLELLESINSIDSAKQAIETMKSGNKEMLVFIDRKGYLLAKVGGIIGDKVTVHLGLSYYAEVDLDSAIKILDKRKDEISKAAQDLNNELQKAASTYNQIVDILNQIQQAAARRQQGE</sequence>
<organism>
    <name type="scientific">Saccharolobus solfataricus (strain ATCC 35092 / DSM 1617 / JCM 11322 / P2)</name>
    <name type="common">Sulfolobus solfataricus</name>
    <dbReference type="NCBI Taxonomy" id="273057"/>
    <lineage>
        <taxon>Archaea</taxon>
        <taxon>Thermoproteota</taxon>
        <taxon>Thermoprotei</taxon>
        <taxon>Sulfolobales</taxon>
        <taxon>Sulfolobaceae</taxon>
        <taxon>Saccharolobus</taxon>
    </lineage>
</organism>
<protein>
    <recommendedName>
        <fullName>Prefoldin subunit alpha</fullName>
    </recommendedName>
    <alternativeName>
        <fullName>GimC subunit alpha</fullName>
    </alternativeName>
</protein>
<evidence type="ECO:0000250" key="1"/>
<evidence type="ECO:0000305" key="2"/>
<reference key="1">
    <citation type="journal article" date="2001" name="Proc. Natl. Acad. Sci. U.S.A.">
        <title>The complete genome of the crenarchaeon Sulfolobus solfataricus P2.</title>
        <authorList>
            <person name="She Q."/>
            <person name="Singh R.K."/>
            <person name="Confalonieri F."/>
            <person name="Zivanovic Y."/>
            <person name="Allard G."/>
            <person name="Awayez M.J."/>
            <person name="Chan-Weiher C.C.-Y."/>
            <person name="Clausen I.G."/>
            <person name="Curtis B.A."/>
            <person name="De Moors A."/>
            <person name="Erauso G."/>
            <person name="Fletcher C."/>
            <person name="Gordon P.M.K."/>
            <person name="Heikamp-de Jong I."/>
            <person name="Jeffries A.C."/>
            <person name="Kozera C.J."/>
            <person name="Medina N."/>
            <person name="Peng X."/>
            <person name="Thi-Ngoc H.P."/>
            <person name="Redder P."/>
            <person name="Schenk M.E."/>
            <person name="Theriault C."/>
            <person name="Tolstrup N."/>
            <person name="Charlebois R.L."/>
            <person name="Doolittle W.F."/>
            <person name="Duguet M."/>
            <person name="Gaasterland T."/>
            <person name="Garrett R.A."/>
            <person name="Ragan M.A."/>
            <person name="Sensen C.W."/>
            <person name="Van der Oost J."/>
        </authorList>
    </citation>
    <scope>NUCLEOTIDE SEQUENCE [LARGE SCALE GENOMIC DNA]</scope>
    <source>
        <strain>ATCC 35092 / DSM 1617 / JCM 11322 / P2</strain>
    </source>
</reference>
<accession>P58179</accession>
<gene>
    <name type="primary">pfdA</name>
    <name type="ordered locus">SSO0349</name>
</gene>
<comment type="function">
    <text evidence="1">Molecular chaperone capable of stabilizing a range of proteins. Seems to fulfill an ATP-independent, HSP70-like function in archaeal de novo protein folding (By similarity).</text>
</comment>
<comment type="subunit">
    <text evidence="1">Heterohexamer of two alpha and four beta subunits.</text>
</comment>
<comment type="subcellular location">
    <subcellularLocation>
        <location evidence="1">Cytoplasm</location>
    </subcellularLocation>
</comment>
<comment type="similarity">
    <text evidence="2">Belongs to the prefoldin subunit alpha family.</text>
</comment>